<sequence>MAEFPASLLILNGKSTDNLPLREAIMLLREEGMTIHVRVTWEKGDAARYVEEARKLGVATVIAGGGDGTINEVSTALIQCEGDDIPALGILPLGTANDFATSVGIPEALDKALKLAIAGDAIAIDMAQVNKQTCFINMATGGFGTRITTETPEKLKAALGSVSYIIHGLMRMDTLQPDRCEIRGENFHWQGDALVIGIGNGRQAGGGQQLCPNALINDGLLQLRIFTGDEILPALVSTLKSDEDNPNIIEGASSWFDIQAPHDITFNLDGEPLSGQNFHIEILPAALRCRLPPDCPLLR</sequence>
<keyword id="KW-0067">ATP-binding</keyword>
<keyword id="KW-0963">Cytoplasm</keyword>
<keyword id="KW-0418">Kinase</keyword>
<keyword id="KW-0444">Lipid biosynthesis</keyword>
<keyword id="KW-0443">Lipid metabolism</keyword>
<keyword id="KW-0460">Magnesium</keyword>
<keyword id="KW-0479">Metal-binding</keyword>
<keyword id="KW-0547">Nucleotide-binding</keyword>
<keyword id="KW-0594">Phospholipid biosynthesis</keyword>
<keyword id="KW-1208">Phospholipid metabolism</keyword>
<keyword id="KW-0808">Transferase</keyword>
<organism>
    <name type="scientific">Escherichia coli O9:H4 (strain HS)</name>
    <dbReference type="NCBI Taxonomy" id="331112"/>
    <lineage>
        <taxon>Bacteria</taxon>
        <taxon>Pseudomonadati</taxon>
        <taxon>Pseudomonadota</taxon>
        <taxon>Gammaproteobacteria</taxon>
        <taxon>Enterobacterales</taxon>
        <taxon>Enterobacteriaceae</taxon>
        <taxon>Escherichia</taxon>
    </lineage>
</organism>
<comment type="function">
    <text evidence="1">Probably phosphorylates lipids; the in vivo substrate is unknown.</text>
</comment>
<comment type="cofactor">
    <cofactor evidence="1">
        <name>Mg(2+)</name>
        <dbReference type="ChEBI" id="CHEBI:18420"/>
    </cofactor>
    <cofactor evidence="1">
        <name>Ca(2+)</name>
        <dbReference type="ChEBI" id="CHEBI:29108"/>
    </cofactor>
    <text evidence="1">Binds 1 Mg(2+) ion per subunit. Ca(2+) may be able to substitute.</text>
</comment>
<comment type="subcellular location">
    <subcellularLocation>
        <location evidence="1">Cytoplasm</location>
    </subcellularLocation>
</comment>
<comment type="similarity">
    <text evidence="1">Belongs to the diacylglycerol/lipid kinase family. YegS lipid kinase subfamily.</text>
</comment>
<accession>A8A1V4</accession>
<evidence type="ECO:0000255" key="1">
    <source>
        <dbReference type="HAMAP-Rule" id="MF_01377"/>
    </source>
</evidence>
<proteinExistence type="inferred from homology"/>
<dbReference type="EC" id="2.7.1.-" evidence="1"/>
<dbReference type="EMBL" id="CP000802">
    <property type="protein sequence ID" value="ABV06508.1"/>
    <property type="molecule type" value="Genomic_DNA"/>
</dbReference>
<dbReference type="RefSeq" id="WP_000807356.1">
    <property type="nucleotide sequence ID" value="NC_009800.1"/>
</dbReference>
<dbReference type="SMR" id="A8A1V4"/>
<dbReference type="KEGG" id="ecx:EcHS_A2225"/>
<dbReference type="HOGENOM" id="CLU_045532_1_1_6"/>
<dbReference type="GO" id="GO:0005737">
    <property type="term" value="C:cytoplasm"/>
    <property type="evidence" value="ECO:0007669"/>
    <property type="project" value="UniProtKB-SubCell"/>
</dbReference>
<dbReference type="GO" id="GO:0005886">
    <property type="term" value="C:plasma membrane"/>
    <property type="evidence" value="ECO:0007669"/>
    <property type="project" value="TreeGrafter"/>
</dbReference>
<dbReference type="GO" id="GO:0005524">
    <property type="term" value="F:ATP binding"/>
    <property type="evidence" value="ECO:0007669"/>
    <property type="project" value="UniProtKB-UniRule"/>
</dbReference>
<dbReference type="GO" id="GO:0001727">
    <property type="term" value="F:lipid kinase activity"/>
    <property type="evidence" value="ECO:0007669"/>
    <property type="project" value="UniProtKB-UniRule"/>
</dbReference>
<dbReference type="GO" id="GO:0000287">
    <property type="term" value="F:magnesium ion binding"/>
    <property type="evidence" value="ECO:0007669"/>
    <property type="project" value="UniProtKB-UniRule"/>
</dbReference>
<dbReference type="GO" id="GO:0008654">
    <property type="term" value="P:phospholipid biosynthetic process"/>
    <property type="evidence" value="ECO:0007669"/>
    <property type="project" value="UniProtKB-UniRule"/>
</dbReference>
<dbReference type="FunFam" id="2.60.200.40:FF:000008">
    <property type="entry name" value="Probable lipid kinase YegS"/>
    <property type="match status" value="1"/>
</dbReference>
<dbReference type="FunFam" id="3.40.50.10330:FF:000008">
    <property type="entry name" value="Probable lipid kinase YegS"/>
    <property type="match status" value="1"/>
</dbReference>
<dbReference type="Gene3D" id="2.60.200.40">
    <property type="match status" value="1"/>
</dbReference>
<dbReference type="Gene3D" id="3.40.50.10330">
    <property type="entry name" value="Probable inorganic polyphosphate/atp-NAD kinase, domain 1"/>
    <property type="match status" value="1"/>
</dbReference>
<dbReference type="HAMAP" id="MF_01377">
    <property type="entry name" value="YegS"/>
    <property type="match status" value="1"/>
</dbReference>
<dbReference type="InterPro" id="IPR017438">
    <property type="entry name" value="ATP-NAD_kinase_N"/>
</dbReference>
<dbReference type="InterPro" id="IPR005218">
    <property type="entry name" value="Diacylglycerol/lipid_kinase"/>
</dbReference>
<dbReference type="InterPro" id="IPR001206">
    <property type="entry name" value="Diacylglycerol_kinase_cat_dom"/>
</dbReference>
<dbReference type="InterPro" id="IPR022433">
    <property type="entry name" value="Lip_kinase_YegS"/>
</dbReference>
<dbReference type="InterPro" id="IPR050187">
    <property type="entry name" value="Lipid_Phosphate_FormReg"/>
</dbReference>
<dbReference type="InterPro" id="IPR016064">
    <property type="entry name" value="NAD/diacylglycerol_kinase_sf"/>
</dbReference>
<dbReference type="InterPro" id="IPR045540">
    <property type="entry name" value="YegS/DAGK_C"/>
</dbReference>
<dbReference type="NCBIfam" id="TIGR03702">
    <property type="entry name" value="lip_kinase_YegS"/>
    <property type="match status" value="1"/>
</dbReference>
<dbReference type="NCBIfam" id="NF009602">
    <property type="entry name" value="PRK13054.1"/>
    <property type="match status" value="1"/>
</dbReference>
<dbReference type="NCBIfam" id="TIGR00147">
    <property type="entry name" value="YegS/Rv2252/BmrU family lipid kinase"/>
    <property type="match status" value="1"/>
</dbReference>
<dbReference type="PANTHER" id="PTHR12358:SF106">
    <property type="entry name" value="LIPID KINASE YEGS"/>
    <property type="match status" value="1"/>
</dbReference>
<dbReference type="PANTHER" id="PTHR12358">
    <property type="entry name" value="SPHINGOSINE KINASE"/>
    <property type="match status" value="1"/>
</dbReference>
<dbReference type="Pfam" id="PF00781">
    <property type="entry name" value="DAGK_cat"/>
    <property type="match status" value="1"/>
</dbReference>
<dbReference type="Pfam" id="PF19279">
    <property type="entry name" value="YegS_C"/>
    <property type="match status" value="1"/>
</dbReference>
<dbReference type="SMART" id="SM00046">
    <property type="entry name" value="DAGKc"/>
    <property type="match status" value="1"/>
</dbReference>
<dbReference type="SUPFAM" id="SSF111331">
    <property type="entry name" value="NAD kinase/diacylglycerol kinase-like"/>
    <property type="match status" value="1"/>
</dbReference>
<dbReference type="PROSITE" id="PS50146">
    <property type="entry name" value="DAGK"/>
    <property type="match status" value="1"/>
</dbReference>
<name>YEGS_ECOHS</name>
<protein>
    <recommendedName>
        <fullName evidence="1">Probable lipid kinase YegS</fullName>
        <ecNumber evidence="1">2.7.1.-</ecNumber>
    </recommendedName>
</protein>
<gene>
    <name evidence="1" type="primary">yegS</name>
    <name type="ordered locus">EcHS_A2225</name>
</gene>
<feature type="chain" id="PRO_1000068252" description="Probable lipid kinase YegS">
    <location>
        <begin position="1"/>
        <end position="299"/>
    </location>
</feature>
<feature type="domain" description="DAGKc" evidence="1">
    <location>
        <begin position="2"/>
        <end position="133"/>
    </location>
</feature>
<feature type="active site" description="Proton acceptor" evidence="1">
    <location>
        <position position="271"/>
    </location>
</feature>
<feature type="binding site" evidence="1">
    <location>
        <position position="40"/>
    </location>
    <ligand>
        <name>ATP</name>
        <dbReference type="ChEBI" id="CHEBI:30616"/>
    </ligand>
</feature>
<feature type="binding site" evidence="1">
    <location>
        <begin position="66"/>
        <end position="72"/>
    </location>
    <ligand>
        <name>ATP</name>
        <dbReference type="ChEBI" id="CHEBI:30616"/>
    </ligand>
</feature>
<feature type="binding site" evidence="1">
    <location>
        <position position="95"/>
    </location>
    <ligand>
        <name>ATP</name>
        <dbReference type="ChEBI" id="CHEBI:30616"/>
    </ligand>
</feature>
<feature type="binding site" evidence="1">
    <location>
        <position position="215"/>
    </location>
    <ligand>
        <name>Mg(2+)</name>
        <dbReference type="ChEBI" id="CHEBI:18420"/>
    </ligand>
</feature>
<feature type="binding site" evidence="1">
    <location>
        <position position="218"/>
    </location>
    <ligand>
        <name>Mg(2+)</name>
        <dbReference type="ChEBI" id="CHEBI:18420"/>
    </ligand>
</feature>
<feature type="binding site" evidence="1">
    <location>
        <position position="220"/>
    </location>
    <ligand>
        <name>Mg(2+)</name>
        <dbReference type="ChEBI" id="CHEBI:18420"/>
    </ligand>
</feature>
<reference key="1">
    <citation type="journal article" date="2008" name="J. Bacteriol.">
        <title>The pangenome structure of Escherichia coli: comparative genomic analysis of E. coli commensal and pathogenic isolates.</title>
        <authorList>
            <person name="Rasko D.A."/>
            <person name="Rosovitz M.J."/>
            <person name="Myers G.S.A."/>
            <person name="Mongodin E.F."/>
            <person name="Fricke W.F."/>
            <person name="Gajer P."/>
            <person name="Crabtree J."/>
            <person name="Sebaihia M."/>
            <person name="Thomson N.R."/>
            <person name="Chaudhuri R."/>
            <person name="Henderson I.R."/>
            <person name="Sperandio V."/>
            <person name="Ravel J."/>
        </authorList>
    </citation>
    <scope>NUCLEOTIDE SEQUENCE [LARGE SCALE GENOMIC DNA]</scope>
    <source>
        <strain>HS</strain>
    </source>
</reference>